<protein>
    <recommendedName>
        <fullName evidence="3">Phospholemman</fullName>
    </recommendedName>
    <alternativeName>
        <fullName evidence="1">FXYD domain-containing ion transport regulator 1</fullName>
    </alternativeName>
    <alternativeName>
        <fullName evidence="8">Sodium/potassium-transporting ATPase subunit FXYD1</fullName>
    </alternativeName>
</protein>
<gene>
    <name evidence="1" type="primary">FXYD1</name>
    <name evidence="1" type="synonym">PLM</name>
</gene>
<name>PLM_SHEEP</name>
<reference evidence="9" key="1">
    <citation type="journal article" date="2010" name="Anim. Genet.">
        <title>The sheep genome reference sequence: a work in progress.</title>
        <authorList>
            <person name="Archibald A.L."/>
            <person name="Cockett N.E."/>
            <person name="Dalrymple B.P."/>
            <person name="Faraut T."/>
            <person name="Kijas J.W."/>
            <person name="Maddox J.F."/>
            <person name="McEwan J.C."/>
            <person name="Hutton Oddy V."/>
            <person name="Raadsma H.W."/>
            <person name="Wade C."/>
            <person name="Wang J."/>
            <person name="Wang W."/>
            <person name="Xun X."/>
        </authorList>
    </citation>
    <scope>NUCLEOTIDE SEQUENCE [LARGE SCALE GENOMIC DNA]</scope>
    <source>
        <strain>Texel</strain>
    </source>
</reference>
<reference evidence="8" key="2">
    <citation type="journal article" date="2011" name="J. Biol. Chem.">
        <title>FXYD proteins reverse inhibition of the Na+-K+ pump mediated by glutathionylation of its beta1 subunit.</title>
        <authorList>
            <person name="Bibert S."/>
            <person name="Liu C.C."/>
            <person name="Figtree G.A."/>
            <person name="Garcia A."/>
            <person name="Hamilton E.J."/>
            <person name="Marassi F.M."/>
            <person name="Sweadner K.J."/>
            <person name="Cornelius F."/>
            <person name="Geering K."/>
            <person name="Rasmussen H.H."/>
        </authorList>
    </citation>
    <scope>GLUTATHIONYLATION</scope>
</reference>
<feature type="signal peptide" evidence="3">
    <location>
        <begin position="1"/>
        <end position="20"/>
    </location>
</feature>
<feature type="chain" id="PRO_5004868555" description="Phospholemman">
    <location>
        <begin position="21"/>
        <end position="92"/>
    </location>
</feature>
<feature type="topological domain" description="Extracellular" evidence="6">
    <location>
        <begin position="21"/>
        <end position="35"/>
    </location>
</feature>
<feature type="transmembrane region" description="Helical" evidence="6">
    <location>
        <begin position="36"/>
        <end position="56"/>
    </location>
</feature>
<feature type="topological domain" description="Cytoplasmic" evidence="6">
    <location>
        <begin position="57"/>
        <end position="92"/>
    </location>
</feature>
<feature type="region of interest" description="Disordered" evidence="7">
    <location>
        <begin position="65"/>
        <end position="92"/>
    </location>
</feature>
<feature type="compositionally biased region" description="Basic residues" evidence="7">
    <location>
        <begin position="83"/>
        <end position="92"/>
    </location>
</feature>
<feature type="modified residue" description="S-glutathionyl cysteine; alternate" evidence="3">
    <location>
        <position position="62"/>
    </location>
</feature>
<feature type="modified residue" description="Phosphothreonine" evidence="5">
    <location>
        <position position="79"/>
    </location>
</feature>
<feature type="modified residue" description="Phosphoserine" evidence="5">
    <location>
        <position position="82"/>
    </location>
</feature>
<feature type="modified residue" description="Phosphoserine; by PKA and PKC" evidence="3">
    <location>
        <position position="83"/>
    </location>
</feature>
<feature type="modified residue" description="Phosphoserine; by PKA" evidence="3">
    <location>
        <position position="88"/>
    </location>
</feature>
<feature type="modified residue" description="Phosphothreonine; by PKC" evidence="3">
    <location>
        <position position="89"/>
    </location>
</feature>
<feature type="lipid moiety-binding region" description="S-palmitoyl cysteine" evidence="1">
    <location>
        <position position="60"/>
    </location>
</feature>
<feature type="lipid moiety-binding region" description="S-palmitoyl cysteine; alternate" evidence="1">
    <location>
        <position position="62"/>
    </location>
</feature>
<dbReference type="EMBL" id="AMGL01028697">
    <property type="status" value="NOT_ANNOTATED_CDS"/>
    <property type="molecule type" value="Genomic_DNA"/>
</dbReference>
<dbReference type="EMBL" id="AMGL01028698">
    <property type="status" value="NOT_ANNOTATED_CDS"/>
    <property type="molecule type" value="Genomic_DNA"/>
</dbReference>
<dbReference type="RefSeq" id="XP_004015213.1">
    <property type="nucleotide sequence ID" value="XM_004015164.6"/>
</dbReference>
<dbReference type="RefSeq" id="XP_012045552.1">
    <property type="nucleotide sequence ID" value="XM_012190162.5"/>
</dbReference>
<dbReference type="RefSeq" id="XP_012045553.1">
    <property type="nucleotide sequence ID" value="XM_012190163.3"/>
</dbReference>
<dbReference type="RefSeq" id="XP_012045554.1">
    <property type="nucleotide sequence ID" value="XM_012190164.4"/>
</dbReference>
<dbReference type="RefSeq" id="XP_042087912.1">
    <property type="nucleotide sequence ID" value="XM_042231978.2"/>
</dbReference>
<dbReference type="RefSeq" id="XP_042087913.1">
    <property type="nucleotide sequence ID" value="XM_042231979.1"/>
</dbReference>
<dbReference type="SMR" id="W5P3P0"/>
<dbReference type="STRING" id="9940.ENSOARP00000005042"/>
<dbReference type="PaxDb" id="9940-ENSOARP00000005042"/>
<dbReference type="GeneID" id="101115476"/>
<dbReference type="KEGG" id="oas:101115476"/>
<dbReference type="CTD" id="5348"/>
<dbReference type="eggNOG" id="ENOG502S5XM">
    <property type="taxonomic scope" value="Eukaryota"/>
</dbReference>
<dbReference type="HOGENOM" id="CLU_171208_2_0_1"/>
<dbReference type="OMA" id="PFNYDYH"/>
<dbReference type="OrthoDB" id="8430468at2759"/>
<dbReference type="Proteomes" id="UP000002356">
    <property type="component" value="Chromosome 14"/>
</dbReference>
<dbReference type="Bgee" id="ENSOARG00000004709">
    <property type="expression patterns" value="Expressed in heart right ventricle and 51 other cell types or tissues"/>
</dbReference>
<dbReference type="GO" id="GO:0016324">
    <property type="term" value="C:apical plasma membrane"/>
    <property type="evidence" value="ECO:0007669"/>
    <property type="project" value="UniProtKB-SubCell"/>
</dbReference>
<dbReference type="GO" id="GO:0005901">
    <property type="term" value="C:caveola"/>
    <property type="evidence" value="ECO:0000250"/>
    <property type="project" value="UniProtKB"/>
</dbReference>
<dbReference type="GO" id="GO:0014704">
    <property type="term" value="C:intercalated disc"/>
    <property type="evidence" value="ECO:0000250"/>
    <property type="project" value="UniProtKB"/>
</dbReference>
<dbReference type="GO" id="GO:0030315">
    <property type="term" value="C:T-tubule"/>
    <property type="evidence" value="ECO:0000250"/>
    <property type="project" value="UniProtKB"/>
</dbReference>
<dbReference type="GO" id="GO:0017080">
    <property type="term" value="F:sodium channel regulator activity"/>
    <property type="evidence" value="ECO:0007669"/>
    <property type="project" value="TreeGrafter"/>
</dbReference>
<dbReference type="GO" id="GO:0010734">
    <property type="term" value="P:negative regulation of protein glutathionylation"/>
    <property type="evidence" value="ECO:0000250"/>
    <property type="project" value="UniProtKB"/>
</dbReference>
<dbReference type="GO" id="GO:0006813">
    <property type="term" value="P:potassium ion transport"/>
    <property type="evidence" value="ECO:0007669"/>
    <property type="project" value="UniProtKB-KW"/>
</dbReference>
<dbReference type="GO" id="GO:0043269">
    <property type="term" value="P:regulation of monoatomic ion transport"/>
    <property type="evidence" value="ECO:0007669"/>
    <property type="project" value="InterPro"/>
</dbReference>
<dbReference type="GO" id="GO:0006814">
    <property type="term" value="P:sodium ion transport"/>
    <property type="evidence" value="ECO:0007669"/>
    <property type="project" value="UniProtKB-KW"/>
</dbReference>
<dbReference type="CDD" id="cd20317">
    <property type="entry name" value="FXYD1"/>
    <property type="match status" value="1"/>
</dbReference>
<dbReference type="FunFam" id="1.20.5.780:FF:000002">
    <property type="entry name" value="FXYD domain-containing ion transport regulator"/>
    <property type="match status" value="1"/>
</dbReference>
<dbReference type="Gene3D" id="1.20.5.780">
    <property type="entry name" value="Single helix bin"/>
    <property type="match status" value="1"/>
</dbReference>
<dbReference type="InterPro" id="IPR047297">
    <property type="entry name" value="FXYD_motif"/>
</dbReference>
<dbReference type="InterPro" id="IPR000272">
    <property type="entry name" value="Ion-transport_regulator_FXYD"/>
</dbReference>
<dbReference type="InterPro" id="IPR047281">
    <property type="entry name" value="PLM"/>
</dbReference>
<dbReference type="PANTHER" id="PTHR14132:SF12">
    <property type="entry name" value="PHOSPHOLEMMAN"/>
    <property type="match status" value="1"/>
</dbReference>
<dbReference type="PANTHER" id="PTHR14132">
    <property type="entry name" value="SODIUM/POTASSIUM-TRANSPORTING ATPASE SUBUNIT GAMMA"/>
    <property type="match status" value="1"/>
</dbReference>
<dbReference type="Pfam" id="PF02038">
    <property type="entry name" value="ATP1G1_PLM_MAT8"/>
    <property type="match status" value="1"/>
</dbReference>
<dbReference type="PROSITE" id="PS01310">
    <property type="entry name" value="FXYD"/>
    <property type="match status" value="1"/>
</dbReference>
<evidence type="ECO:0000250" key="1">
    <source>
        <dbReference type="UniProtKB" id="O00168"/>
    </source>
</evidence>
<evidence type="ECO:0000250" key="2">
    <source>
        <dbReference type="UniProtKB" id="O08589"/>
    </source>
</evidence>
<evidence type="ECO:0000250" key="3">
    <source>
        <dbReference type="UniProtKB" id="P56513"/>
    </source>
</evidence>
<evidence type="ECO:0000250" key="4">
    <source>
        <dbReference type="UniProtKB" id="Q3SZX0"/>
    </source>
</evidence>
<evidence type="ECO:0000250" key="5">
    <source>
        <dbReference type="UniProtKB" id="Q9Z239"/>
    </source>
</evidence>
<evidence type="ECO:0000255" key="6"/>
<evidence type="ECO:0000256" key="7">
    <source>
        <dbReference type="SAM" id="MobiDB-lite"/>
    </source>
</evidence>
<evidence type="ECO:0000305" key="8"/>
<evidence type="ECO:0000312" key="9">
    <source>
        <dbReference type="Proteomes" id="UP000002356"/>
    </source>
</evidence>
<organism evidence="9">
    <name type="scientific">Ovis aries</name>
    <name type="common">Sheep</name>
    <dbReference type="NCBI Taxonomy" id="9940"/>
    <lineage>
        <taxon>Eukaryota</taxon>
        <taxon>Metazoa</taxon>
        <taxon>Chordata</taxon>
        <taxon>Craniata</taxon>
        <taxon>Vertebrata</taxon>
        <taxon>Euteleostomi</taxon>
        <taxon>Mammalia</taxon>
        <taxon>Eutheria</taxon>
        <taxon>Laurasiatheria</taxon>
        <taxon>Artiodactyla</taxon>
        <taxon>Ruminantia</taxon>
        <taxon>Pecora</taxon>
        <taxon>Bovidae</taxon>
        <taxon>Caprinae</taxon>
        <taxon>Ovis</taxon>
    </lineage>
</organism>
<proteinExistence type="inferred from homology"/>
<sequence length="92" mass="10447">MASLSHILVLCVGLLAMVNAEAPQEHDPFTYDYQSLRIGGLIIAGILFILGILIVLSRRCRCKFNQQQRTGEPDEEEGTFRSSIRRLSTRRR</sequence>
<keyword id="KW-1003">Cell membrane</keyword>
<keyword id="KW-0318">Glutathionylation</keyword>
<keyword id="KW-0406">Ion transport</keyword>
<keyword id="KW-0449">Lipoprotein</keyword>
<keyword id="KW-0472">Membrane</keyword>
<keyword id="KW-0564">Palmitate</keyword>
<keyword id="KW-0597">Phosphoprotein</keyword>
<keyword id="KW-0630">Potassium</keyword>
<keyword id="KW-0633">Potassium transport</keyword>
<keyword id="KW-1185">Reference proteome</keyword>
<keyword id="KW-0732">Signal</keyword>
<keyword id="KW-0915">Sodium</keyword>
<keyword id="KW-0739">Sodium transport</keyword>
<keyword id="KW-0740">Sodium/potassium transport</keyword>
<keyword id="KW-0812">Transmembrane</keyword>
<keyword id="KW-1133">Transmembrane helix</keyword>
<keyword id="KW-0813">Transport</keyword>
<accession>W5P3P0</accession>
<comment type="function">
    <text evidence="2 3 5">Associates with and regulates the activity of the sodium/potassium-transporting ATPase (NKA) which transports Na(+) out of the cell and K(+) into the cell. Inhibits NKA activity in its unphosphorylated state and stimulates activity when phosphorylated. Reduces glutathionylation of the NKA beta-1 subunit ATP1B1, thus reversing glutathionylation-mediated inhibition of ATP1B1. Contributes to female sexual development by maintaining the excitability of neurons which secrete gonadotropin-releasing hormone.</text>
</comment>
<comment type="subunit">
    <text evidence="1 2 3 4 5">Homotetramer. Monomer. Regulatory subunit of the sodium/potassium-transporting ATPase (NKA) which is composed of a catalytic alpha subunit, a non-catalytic beta subunit and an additional regulatory subunit. The monomeric form associates with NKA while the oligomeric form does not. Interacts with the catalytic alpha-1 subunit ATP1A1. Also interacts with the catalytic alpha-2 and alpha-3 subunits ATP1A2 and ATP1A3. Very little interaction with ATP1A1, ATP1A2 or ATP1A3 when phosphorylated at Ser-83. Interacts with the non-catalytic beta-1 subunit ATP1B1. Oxidative stress decreases interaction with ATP1A1 but increases interaction with ATP1B1.</text>
</comment>
<comment type="subcellular location">
    <subcellularLocation>
        <location evidence="3">Cell membrane</location>
        <location evidence="3">Sarcolemma</location>
        <topology evidence="6">Single-pass type I membrane protein</topology>
    </subcellularLocation>
    <subcellularLocation>
        <location evidence="2">Apical cell membrane</location>
        <topology evidence="6">Single-pass type I membrane protein</topology>
    </subcellularLocation>
    <subcellularLocation>
        <location evidence="2">Membrane</location>
        <location evidence="2">Caveola</location>
    </subcellularLocation>
    <subcellularLocation>
        <location evidence="2">Cell membrane</location>
        <location evidence="2">Sarcolemma</location>
        <location evidence="2">T-tubule</location>
    </subcellularLocation>
    <text evidence="2">Detected in the apical cell membrane in brain. In myocytes, localizes to sarcolemma, t-tubules and intercalated disks.</text>
</comment>
<comment type="domain">
    <text evidence="2">The cytoplasmic domain is sufficient to regulate sodium/potassium-transporting ATPase activity.</text>
</comment>
<comment type="PTM">
    <text evidence="1 2 3">Major plasma membrane substrate for cAMP-dependent protein kinase (PKA) and protein kinase C (PKC) in several different tissues. Phosphorylated in response to insulin and adrenergic stimulation. Phosphorylation at Ser-88 stimulates sodium/potassium-transporting ATPase activity while the unphosphorylated form inhibits sodium/potassium-transporting ATPase activity. Phosphorylation increases tetramerization, decreases binding to ATP1A1 and reduces inhibition of ATP1A1 activity. Phosphorylation at Ser-83 leads to greatly reduced interaction with ATP1A1, ATP1A2 and ATP1A3. May be phosphorylated by DMPK.</text>
</comment>
<comment type="PTM">
    <text evidence="1">Palmitoylation increases half-life and stability and is enhanced upon phosphorylation at Ser-88 by PKA.</text>
</comment>
<comment type="similarity">
    <text evidence="8">Belongs to the FXYD family.</text>
</comment>